<protein>
    <recommendedName>
        <fullName>Venom acid phosphatase Acph-1</fullName>
        <ecNumber>3.1.3.2</ecNumber>
    </recommendedName>
    <allergenName>Api m 3</allergenName>
</protein>
<accession>Q5BLY5</accession>
<accession>B6E2X9</accession>
<accession>Q4TUB9</accession>
<reference key="1">
    <citation type="journal article" date="2005" name="J. Allergy Clin. Immunol.">
        <title>Sequence and characterization of honeybee venom acid phosphatase.</title>
        <authorList>
            <person name="Hoffman D.R."/>
            <person name="Weimer E.T."/>
            <person name="Sakell R.H."/>
            <person name="Schmidt M."/>
        </authorList>
    </citation>
    <scope>NUCLEOTIDE SEQUENCE [MRNA]</scope>
    <scope>PROTEIN SEQUENCE OF 19-53; 62-72; 75-130; 134-154 AND 312-381</scope>
    <scope>IDENTIFICATION BY MASS SPECTROMETRY</scope>
    <scope>ALLERGEN</scope>
    <source>
        <tissue>Venom</tissue>
        <tissue>Venom gland</tissue>
    </source>
</reference>
<reference key="2">
    <citation type="submission" date="2008-09" db="EMBL/GenBank/DDBJ databases">
        <title>Molecular cloning of honeybee venom allergen acid phosphatase.</title>
        <authorList>
            <person name="Zhang Q."/>
            <person name="Liu Z."/>
            <person name="Wu Y."/>
        </authorList>
    </citation>
    <scope>NUCLEOTIDE SEQUENCE [MRNA]</scope>
    <source>
        <tissue>Venom gland</tissue>
    </source>
</reference>
<reference key="3">
    <citation type="journal article" date="2006" name="Nature">
        <title>Insights into social insects from the genome of the honeybee Apis mellifera.</title>
        <authorList>
            <consortium name="Honeybee genome sequencing consortium"/>
        </authorList>
    </citation>
    <scope>NUCLEOTIDE SEQUENCE [LARGE SCALE GENOMIC DNA]</scope>
</reference>
<reference key="4">
    <citation type="journal article" date="2006" name="J. Allergy Clin. Immunol.">
        <title>Molecular cloning and expression in insect cells of honeybee venom allergen acid phosphatase (Api m 3).</title>
        <authorList>
            <person name="Grunwald T."/>
            <person name="Bockisch B."/>
            <person name="Spillner E."/>
            <person name="Ring J."/>
            <person name="Bredehorst R."/>
            <person name="Ollert M.W."/>
        </authorList>
    </citation>
    <scope>NUCLEOTIDE SEQUENCE [MRNA] OF 16-388</scope>
    <scope>ALLERGEN</scope>
    <source>
        <tissue>Venom gland</tissue>
    </source>
</reference>
<reference key="5">
    <citation type="journal article" date="2006" name="Clin. Rev. Allergy Immunol.">
        <title>Hymenoptera venom allergens.</title>
        <authorList>
            <person name="Hoffman D.R."/>
        </authorList>
    </citation>
    <scope>REVIEW</scope>
</reference>
<keyword id="KW-0020">Allergen</keyword>
<keyword id="KW-0903">Direct protein sequencing</keyword>
<keyword id="KW-1015">Disulfide bond</keyword>
<keyword id="KW-0325">Glycoprotein</keyword>
<keyword id="KW-0378">Hydrolase</keyword>
<keyword id="KW-1185">Reference proteome</keyword>
<keyword id="KW-0964">Secreted</keyword>
<keyword id="KW-0732">Signal</keyword>
<evidence type="ECO:0000250" key="1"/>
<evidence type="ECO:0000255" key="2"/>
<evidence type="ECO:0000269" key="3">
    <source>
    </source>
</evidence>
<evidence type="ECO:0000269" key="4">
    <source ref="1"/>
</evidence>
<evidence type="ECO:0000305" key="5"/>
<sequence length="388" mass="45389">MSVIAILAMVVGVQAELKQINVIFRHGDRIPDEKNEMYPKDPYLYYDFYPLERGELTNSGKMREYQLGQFLRERYGDFLGDIYTEESVSALSSFYDRTKMSLQLVLAALYPPNKLQQWNEDLNWQPIATKYLRRYEDNIFLPEDCLLFTIELDRVLESPRGKYEFSKYDKLKKKLEEWTGKNITTPWDYYYIYHTLVAEQSYGLTLPSWTNNIFPRGELFDATVFTYNITNSTPLLKKLYGGPLLRIFTKHMLDVVSGTQKKKRKIYLFSGHESNIASVLHALQLYYPHVPEYSSSIIMELHNIEGTHYVKIVYYLGIPSEARELQLPGCEVLCPLYKYLQLIENVIPSNEELICDKRFVDESANNLSIEELDFVKLNLIRIAGTENK</sequence>
<feature type="signal peptide" evidence="2">
    <location>
        <begin position="1"/>
        <end position="15"/>
    </location>
</feature>
<feature type="chain" id="PRO_5000095341" description="Venom acid phosphatase Acph-1">
    <location>
        <begin position="16"/>
        <end position="388"/>
    </location>
</feature>
<feature type="active site" description="Nucleophile" evidence="1">
    <location>
        <position position="26"/>
    </location>
</feature>
<feature type="active site" description="Proton donor" evidence="1">
    <location>
        <position position="273"/>
    </location>
</feature>
<feature type="glycosylation site" description="N-linked (GlcNAc...) asparagine" evidence="2">
    <location>
        <position position="182"/>
    </location>
</feature>
<feature type="glycosylation site" description="N-linked (GlcNAc...) asparagine" evidence="2">
    <location>
        <position position="228"/>
    </location>
</feature>
<feature type="glycosylation site" description="N-linked (GlcNAc...) asparagine" evidence="2">
    <location>
        <position position="366"/>
    </location>
</feature>
<feature type="disulfide bond" evidence="1">
    <location>
        <begin position="145"/>
        <end position="355"/>
    </location>
</feature>
<feature type="disulfide bond" evidence="1">
    <location>
        <begin position="330"/>
        <end position="334"/>
    </location>
</feature>
<feature type="sequence conflict" description="In Ref. 2; ACI25605." evidence="5" ref="2">
    <original>L</original>
    <variation>F</variation>
    <location>
        <position position="152"/>
    </location>
</feature>
<feature type="sequence conflict" description="In Ref. 2; ACI25605." evidence="5" ref="2">
    <original>S</original>
    <variation>A</variation>
    <location>
        <position position="278"/>
    </location>
</feature>
<feature type="sequence conflict" description="In Ref. 2; ACI25605." evidence="5" ref="2">
    <original>R</original>
    <variation>G</variation>
    <location>
        <position position="323"/>
    </location>
</feature>
<feature type="sequence conflict" description="In Ref. 2; ACI25605." evidence="5" ref="2">
    <original>V</original>
    <variation>A</variation>
    <location>
        <position position="360"/>
    </location>
</feature>
<dbReference type="EC" id="3.1.3.2"/>
<dbReference type="EMBL" id="AY939855">
    <property type="protein sequence ID" value="AAX33235.1"/>
    <property type="molecule type" value="mRNA"/>
</dbReference>
<dbReference type="EMBL" id="FJ200211">
    <property type="protein sequence ID" value="ACI25605.1"/>
    <property type="molecule type" value="mRNA"/>
</dbReference>
<dbReference type="EMBL" id="DQ058012">
    <property type="protein sequence ID" value="AAY57281.1"/>
    <property type="molecule type" value="mRNA"/>
</dbReference>
<dbReference type="RefSeq" id="NP_001013377.2">
    <property type="nucleotide sequence ID" value="NM_001013359.2"/>
</dbReference>
<dbReference type="SMR" id="Q5BLY5"/>
<dbReference type="STRING" id="7460.Q5BLY5"/>
<dbReference type="Allergome" id="2778">
    <property type="allergen name" value="Api m A1-A2-A3"/>
</dbReference>
<dbReference type="Allergome" id="3090">
    <property type="allergen name" value="Api m 3.0101"/>
</dbReference>
<dbReference type="Allergome" id="47">
    <property type="allergen name" value="Api m 3"/>
</dbReference>
<dbReference type="PaxDb" id="7460-GB41338-PA"/>
<dbReference type="EnsemblMetazoa" id="NM_001013359">
    <property type="protein sequence ID" value="NP_001013377"/>
    <property type="gene ID" value="GeneID_411830"/>
</dbReference>
<dbReference type="GeneID" id="411830"/>
<dbReference type="KEGG" id="ame:411830"/>
<dbReference type="CTD" id="48445"/>
<dbReference type="eggNOG" id="KOG3720">
    <property type="taxonomic scope" value="Eukaryota"/>
</dbReference>
<dbReference type="InParanoid" id="Q5BLY5"/>
<dbReference type="BRENDA" id="3.1.3.2">
    <property type="organism ID" value="387"/>
</dbReference>
<dbReference type="Proteomes" id="UP000005203">
    <property type="component" value="Linkage group LG5"/>
</dbReference>
<dbReference type="GO" id="GO:0005576">
    <property type="term" value="C:extracellular region"/>
    <property type="evidence" value="ECO:0007669"/>
    <property type="project" value="UniProtKB-SubCell"/>
</dbReference>
<dbReference type="GO" id="GO:0003993">
    <property type="term" value="F:acid phosphatase activity"/>
    <property type="evidence" value="ECO:0007669"/>
    <property type="project" value="UniProtKB-EC"/>
</dbReference>
<dbReference type="CDD" id="cd07061">
    <property type="entry name" value="HP_HAP_like"/>
    <property type="match status" value="1"/>
</dbReference>
<dbReference type="Gene3D" id="3.40.50.1240">
    <property type="entry name" value="Phosphoglycerate mutase-like"/>
    <property type="match status" value="1"/>
</dbReference>
<dbReference type="InterPro" id="IPR033379">
    <property type="entry name" value="Acid_Pase_AS"/>
</dbReference>
<dbReference type="InterPro" id="IPR000560">
    <property type="entry name" value="His_Pase_clade-2"/>
</dbReference>
<dbReference type="InterPro" id="IPR029033">
    <property type="entry name" value="His_PPase_superfam"/>
</dbReference>
<dbReference type="InterPro" id="IPR050645">
    <property type="entry name" value="Histidine_acid_phosphatase"/>
</dbReference>
<dbReference type="PANTHER" id="PTHR11567">
    <property type="entry name" value="ACID PHOSPHATASE-RELATED"/>
    <property type="match status" value="1"/>
</dbReference>
<dbReference type="PANTHER" id="PTHR11567:SF211">
    <property type="entry name" value="PROSTATIC ACID PHOSPHATASE"/>
    <property type="match status" value="1"/>
</dbReference>
<dbReference type="Pfam" id="PF00328">
    <property type="entry name" value="His_Phos_2"/>
    <property type="match status" value="1"/>
</dbReference>
<dbReference type="SUPFAM" id="SSF53254">
    <property type="entry name" value="Phosphoglycerate mutase-like"/>
    <property type="match status" value="1"/>
</dbReference>
<dbReference type="PROSITE" id="PS00616">
    <property type="entry name" value="HIS_ACID_PHOSPHAT_1"/>
    <property type="match status" value="1"/>
</dbReference>
<comment type="catalytic activity">
    <reaction>
        <text>a phosphate monoester + H2O = an alcohol + phosphate</text>
        <dbReference type="Rhea" id="RHEA:15017"/>
        <dbReference type="ChEBI" id="CHEBI:15377"/>
        <dbReference type="ChEBI" id="CHEBI:30879"/>
        <dbReference type="ChEBI" id="CHEBI:43474"/>
        <dbReference type="ChEBI" id="CHEBI:67140"/>
        <dbReference type="EC" id="3.1.3.2"/>
    </reaction>
</comment>
<comment type="subcellular location">
    <subcellularLocation>
        <location>Secreted</location>
    </subcellularLocation>
</comment>
<comment type="tissue specificity">
    <text>Expressed by the venom gland.</text>
</comment>
<comment type="allergen">
    <text evidence="3 4">Causes an allergic reaction in human.</text>
</comment>
<comment type="similarity">
    <text evidence="5">Belongs to the histidine acid phosphatase family.</text>
</comment>
<organism>
    <name type="scientific">Apis mellifera</name>
    <name type="common">Honeybee</name>
    <dbReference type="NCBI Taxonomy" id="7460"/>
    <lineage>
        <taxon>Eukaryota</taxon>
        <taxon>Metazoa</taxon>
        <taxon>Ecdysozoa</taxon>
        <taxon>Arthropoda</taxon>
        <taxon>Hexapoda</taxon>
        <taxon>Insecta</taxon>
        <taxon>Pterygota</taxon>
        <taxon>Neoptera</taxon>
        <taxon>Endopterygota</taxon>
        <taxon>Hymenoptera</taxon>
        <taxon>Apocrita</taxon>
        <taxon>Aculeata</taxon>
        <taxon>Apoidea</taxon>
        <taxon>Anthophila</taxon>
        <taxon>Apidae</taxon>
        <taxon>Apis</taxon>
    </lineage>
</organism>
<proteinExistence type="evidence at protein level"/>
<name>ACPH1_APIME</name>